<accession>A6QED4</accession>
<reference key="1">
    <citation type="journal article" date="2008" name="J. Bacteriol.">
        <title>Genome sequence of Staphylococcus aureus strain Newman and comparative analysis of staphylococcal genomes: polymorphism and evolution of two major pathogenicity islands.</title>
        <authorList>
            <person name="Baba T."/>
            <person name="Bae T."/>
            <person name="Schneewind O."/>
            <person name="Takeuchi F."/>
            <person name="Hiramatsu K."/>
        </authorList>
    </citation>
    <scope>NUCLEOTIDE SEQUENCE [LARGE SCALE GENOMIC DNA]</scope>
    <source>
        <strain>Newman</strain>
    </source>
</reference>
<protein>
    <recommendedName>
        <fullName evidence="1">Recombination protein RecR</fullName>
    </recommendedName>
</protein>
<gene>
    <name evidence="1" type="primary">recR</name>
    <name type="ordered locus">NWMN_0444</name>
</gene>
<keyword id="KW-0227">DNA damage</keyword>
<keyword id="KW-0233">DNA recombination</keyword>
<keyword id="KW-0234">DNA repair</keyword>
<keyword id="KW-0479">Metal-binding</keyword>
<keyword id="KW-0862">Zinc</keyword>
<keyword id="KW-0863">Zinc-finger</keyword>
<name>RECR_STAAE</name>
<dbReference type="EMBL" id="AP009351">
    <property type="protein sequence ID" value="BAF66716.1"/>
    <property type="molecule type" value="Genomic_DNA"/>
</dbReference>
<dbReference type="RefSeq" id="WP_000559156.1">
    <property type="nucleotide sequence ID" value="NZ_JBBIAE010000014.1"/>
</dbReference>
<dbReference type="SMR" id="A6QED4"/>
<dbReference type="KEGG" id="sae:NWMN_0444"/>
<dbReference type="HOGENOM" id="CLU_060739_1_0_9"/>
<dbReference type="Proteomes" id="UP000006386">
    <property type="component" value="Chromosome"/>
</dbReference>
<dbReference type="GO" id="GO:0003677">
    <property type="term" value="F:DNA binding"/>
    <property type="evidence" value="ECO:0007669"/>
    <property type="project" value="UniProtKB-UniRule"/>
</dbReference>
<dbReference type="GO" id="GO:0008270">
    <property type="term" value="F:zinc ion binding"/>
    <property type="evidence" value="ECO:0007669"/>
    <property type="project" value="UniProtKB-KW"/>
</dbReference>
<dbReference type="GO" id="GO:0006310">
    <property type="term" value="P:DNA recombination"/>
    <property type="evidence" value="ECO:0007669"/>
    <property type="project" value="UniProtKB-UniRule"/>
</dbReference>
<dbReference type="GO" id="GO:0006281">
    <property type="term" value="P:DNA repair"/>
    <property type="evidence" value="ECO:0007669"/>
    <property type="project" value="UniProtKB-UniRule"/>
</dbReference>
<dbReference type="CDD" id="cd01025">
    <property type="entry name" value="TOPRIM_recR"/>
    <property type="match status" value="1"/>
</dbReference>
<dbReference type="Gene3D" id="3.30.60.80">
    <property type="match status" value="1"/>
</dbReference>
<dbReference type="Gene3D" id="3.40.1360.10">
    <property type="match status" value="1"/>
</dbReference>
<dbReference type="Gene3D" id="6.10.250.240">
    <property type="match status" value="1"/>
</dbReference>
<dbReference type="Gene3D" id="1.10.8.420">
    <property type="entry name" value="RecR Domain 1"/>
    <property type="match status" value="1"/>
</dbReference>
<dbReference type="HAMAP" id="MF_00017">
    <property type="entry name" value="RecR"/>
    <property type="match status" value="1"/>
</dbReference>
<dbReference type="InterPro" id="IPR000093">
    <property type="entry name" value="DNA_Rcmb_RecR"/>
</dbReference>
<dbReference type="InterPro" id="IPR003583">
    <property type="entry name" value="Hlx-hairpin-Hlx_DNA-bd_motif"/>
</dbReference>
<dbReference type="InterPro" id="IPR023627">
    <property type="entry name" value="Rcmb_RecR"/>
</dbReference>
<dbReference type="InterPro" id="IPR015967">
    <property type="entry name" value="Rcmb_RecR_Znf"/>
</dbReference>
<dbReference type="InterPro" id="IPR006171">
    <property type="entry name" value="TOPRIM_dom"/>
</dbReference>
<dbReference type="InterPro" id="IPR034137">
    <property type="entry name" value="TOPRIM_RecR"/>
</dbReference>
<dbReference type="NCBIfam" id="TIGR00615">
    <property type="entry name" value="recR"/>
    <property type="match status" value="1"/>
</dbReference>
<dbReference type="PANTHER" id="PTHR30446">
    <property type="entry name" value="RECOMBINATION PROTEIN RECR"/>
    <property type="match status" value="1"/>
</dbReference>
<dbReference type="PANTHER" id="PTHR30446:SF0">
    <property type="entry name" value="RECOMBINATION PROTEIN RECR"/>
    <property type="match status" value="1"/>
</dbReference>
<dbReference type="Pfam" id="PF21175">
    <property type="entry name" value="RecR_C"/>
    <property type="match status" value="1"/>
</dbReference>
<dbReference type="Pfam" id="PF21176">
    <property type="entry name" value="RecR_HhH"/>
    <property type="match status" value="1"/>
</dbReference>
<dbReference type="Pfam" id="PF02132">
    <property type="entry name" value="RecR_ZnF"/>
    <property type="match status" value="1"/>
</dbReference>
<dbReference type="Pfam" id="PF13662">
    <property type="entry name" value="Toprim_4"/>
    <property type="match status" value="1"/>
</dbReference>
<dbReference type="SMART" id="SM00278">
    <property type="entry name" value="HhH1"/>
    <property type="match status" value="1"/>
</dbReference>
<dbReference type="SMART" id="SM00493">
    <property type="entry name" value="TOPRIM"/>
    <property type="match status" value="1"/>
</dbReference>
<dbReference type="SUPFAM" id="SSF111304">
    <property type="entry name" value="Recombination protein RecR"/>
    <property type="match status" value="1"/>
</dbReference>
<dbReference type="PROSITE" id="PS01300">
    <property type="entry name" value="RECR"/>
    <property type="match status" value="1"/>
</dbReference>
<dbReference type="PROSITE" id="PS50880">
    <property type="entry name" value="TOPRIM"/>
    <property type="match status" value="1"/>
</dbReference>
<sequence>MHYPEPISKLIDSFMKLPGIGPKTAQRLAFHTLDMKEDDVVQFAKALVDVKRELTYCSVCGHITENDPCYICEDKQRDRSVICVVEDDKDVIAMEKMREYKGLYHVLHGSISPMDGIGPEDINIPSLIERLKNDEVSELILAMNPNLEGESTAMYISRLVKPIGIKVTRLAQGLSVGGDLEYADEVTLSKAIAGRTEM</sequence>
<evidence type="ECO:0000255" key="1">
    <source>
        <dbReference type="HAMAP-Rule" id="MF_00017"/>
    </source>
</evidence>
<organism>
    <name type="scientific">Staphylococcus aureus (strain Newman)</name>
    <dbReference type="NCBI Taxonomy" id="426430"/>
    <lineage>
        <taxon>Bacteria</taxon>
        <taxon>Bacillati</taxon>
        <taxon>Bacillota</taxon>
        <taxon>Bacilli</taxon>
        <taxon>Bacillales</taxon>
        <taxon>Staphylococcaceae</taxon>
        <taxon>Staphylococcus</taxon>
    </lineage>
</organism>
<proteinExistence type="inferred from homology"/>
<comment type="function">
    <text evidence="1">May play a role in DNA repair. It seems to be involved in an RecBC-independent recombinational process of DNA repair. It may act with RecF and RecO.</text>
</comment>
<comment type="similarity">
    <text evidence="1">Belongs to the RecR family.</text>
</comment>
<feature type="chain" id="PRO_1000070976" description="Recombination protein RecR">
    <location>
        <begin position="1"/>
        <end position="198"/>
    </location>
</feature>
<feature type="domain" description="Toprim" evidence="1">
    <location>
        <begin position="80"/>
        <end position="175"/>
    </location>
</feature>
<feature type="zinc finger region" description="C4-type" evidence="1">
    <location>
        <begin position="57"/>
        <end position="72"/>
    </location>
</feature>